<sequence>MSRLQEQYKNKISLILQKELGMSNPMQTPKIEKITINMGLGNALGDKKILQSGLEEMSLISGQKPLTCNARKSVASFKLREGNPIGCKVTLRKQKMYEFLDRLVNITIPRIRDFRGLKTTAFDGRGNYNMGITEQITFPEIDFEKVTKIRGMDIAITTTAKSDEDAKKLLAMFKFPFKG</sequence>
<evidence type="ECO:0000255" key="1">
    <source>
        <dbReference type="HAMAP-Rule" id="MF_01333"/>
    </source>
</evidence>
<evidence type="ECO:0000305" key="2"/>
<organism>
    <name type="scientific">Vesicomyosocius okutanii subsp. Calyptogena okutanii (strain HA)</name>
    <dbReference type="NCBI Taxonomy" id="412965"/>
    <lineage>
        <taxon>Bacteria</taxon>
        <taxon>Pseudomonadati</taxon>
        <taxon>Pseudomonadota</taxon>
        <taxon>Gammaproteobacteria</taxon>
        <taxon>Candidatus Pseudothioglobaceae</taxon>
        <taxon>Candidatus Vesicomyosocius</taxon>
    </lineage>
</organism>
<accession>A5CXL6</accession>
<comment type="function">
    <text evidence="1">This is one of the proteins that bind and probably mediate the attachment of the 5S RNA into the large ribosomal subunit, where it forms part of the central protuberance. In the 70S ribosome it contacts protein S13 of the 30S subunit (bridge B1b), connecting the 2 subunits; this bridge is implicated in subunit movement. Contacts the P site tRNA; the 5S rRNA and some of its associated proteins might help stabilize positioning of ribosome-bound tRNAs.</text>
</comment>
<comment type="subunit">
    <text evidence="1">Part of the 50S ribosomal subunit; part of the 5S rRNA/L5/L18/L25 subcomplex. Contacts the 5S rRNA and the P site tRNA. Forms a bridge to the 30S subunit in the 70S ribosome.</text>
</comment>
<comment type="similarity">
    <text evidence="1">Belongs to the universal ribosomal protein uL5 family.</text>
</comment>
<reference key="1">
    <citation type="journal article" date="2007" name="Curr. Biol.">
        <title>Reduced genome of the thioautotrophic intracellular symbiont in a deep-sea clam, Calyptogena okutanii.</title>
        <authorList>
            <person name="Kuwahara H."/>
            <person name="Yoshida T."/>
            <person name="Takaki Y."/>
            <person name="Shimamura S."/>
            <person name="Nishi S."/>
            <person name="Harada M."/>
            <person name="Matsuyama K."/>
            <person name="Takishita K."/>
            <person name="Kawato M."/>
            <person name="Uematsu K."/>
            <person name="Fujiwara Y."/>
            <person name="Sato T."/>
            <person name="Kato C."/>
            <person name="Kitagawa M."/>
            <person name="Kato I."/>
            <person name="Maruyama T."/>
        </authorList>
    </citation>
    <scope>NUCLEOTIDE SEQUENCE [LARGE SCALE GENOMIC DNA]</scope>
    <source>
        <strain>HA</strain>
    </source>
</reference>
<feature type="chain" id="PRO_1000052854" description="Large ribosomal subunit protein uL5">
    <location>
        <begin position="1"/>
        <end position="179"/>
    </location>
</feature>
<protein>
    <recommendedName>
        <fullName evidence="1">Large ribosomal subunit protein uL5</fullName>
    </recommendedName>
    <alternativeName>
        <fullName evidence="2">50S ribosomal protein L5</fullName>
    </alternativeName>
</protein>
<proteinExistence type="inferred from homology"/>
<dbReference type="EMBL" id="AP009247">
    <property type="protein sequence ID" value="BAF61311.1"/>
    <property type="molecule type" value="Genomic_DNA"/>
</dbReference>
<dbReference type="RefSeq" id="WP_011929581.1">
    <property type="nucleotide sequence ID" value="NC_009465.1"/>
</dbReference>
<dbReference type="SMR" id="A5CXL6"/>
<dbReference type="STRING" id="412965.COSY_0181"/>
<dbReference type="KEGG" id="vok:COSY_0181"/>
<dbReference type="eggNOG" id="COG0094">
    <property type="taxonomic scope" value="Bacteria"/>
</dbReference>
<dbReference type="HOGENOM" id="CLU_061015_2_1_6"/>
<dbReference type="OrthoDB" id="9806626at2"/>
<dbReference type="Proteomes" id="UP000000247">
    <property type="component" value="Chromosome"/>
</dbReference>
<dbReference type="GO" id="GO:1990904">
    <property type="term" value="C:ribonucleoprotein complex"/>
    <property type="evidence" value="ECO:0007669"/>
    <property type="project" value="UniProtKB-KW"/>
</dbReference>
<dbReference type="GO" id="GO:0005840">
    <property type="term" value="C:ribosome"/>
    <property type="evidence" value="ECO:0007669"/>
    <property type="project" value="UniProtKB-KW"/>
</dbReference>
<dbReference type="GO" id="GO:0019843">
    <property type="term" value="F:rRNA binding"/>
    <property type="evidence" value="ECO:0007669"/>
    <property type="project" value="UniProtKB-UniRule"/>
</dbReference>
<dbReference type="GO" id="GO:0003735">
    <property type="term" value="F:structural constituent of ribosome"/>
    <property type="evidence" value="ECO:0007669"/>
    <property type="project" value="InterPro"/>
</dbReference>
<dbReference type="GO" id="GO:0000049">
    <property type="term" value="F:tRNA binding"/>
    <property type="evidence" value="ECO:0007669"/>
    <property type="project" value="UniProtKB-UniRule"/>
</dbReference>
<dbReference type="GO" id="GO:0006412">
    <property type="term" value="P:translation"/>
    <property type="evidence" value="ECO:0007669"/>
    <property type="project" value="UniProtKB-UniRule"/>
</dbReference>
<dbReference type="FunFam" id="3.30.1440.10:FF:000001">
    <property type="entry name" value="50S ribosomal protein L5"/>
    <property type="match status" value="1"/>
</dbReference>
<dbReference type="Gene3D" id="3.30.1440.10">
    <property type="match status" value="1"/>
</dbReference>
<dbReference type="HAMAP" id="MF_01333_B">
    <property type="entry name" value="Ribosomal_uL5_B"/>
    <property type="match status" value="1"/>
</dbReference>
<dbReference type="InterPro" id="IPR002132">
    <property type="entry name" value="Ribosomal_uL5"/>
</dbReference>
<dbReference type="InterPro" id="IPR020930">
    <property type="entry name" value="Ribosomal_uL5_bac-type"/>
</dbReference>
<dbReference type="InterPro" id="IPR031309">
    <property type="entry name" value="Ribosomal_uL5_C"/>
</dbReference>
<dbReference type="InterPro" id="IPR020929">
    <property type="entry name" value="Ribosomal_uL5_CS"/>
</dbReference>
<dbReference type="InterPro" id="IPR022803">
    <property type="entry name" value="Ribosomal_uL5_dom_sf"/>
</dbReference>
<dbReference type="InterPro" id="IPR031310">
    <property type="entry name" value="Ribosomal_uL5_N"/>
</dbReference>
<dbReference type="NCBIfam" id="NF000585">
    <property type="entry name" value="PRK00010.1"/>
    <property type="match status" value="1"/>
</dbReference>
<dbReference type="PANTHER" id="PTHR11994">
    <property type="entry name" value="60S RIBOSOMAL PROTEIN L11-RELATED"/>
    <property type="match status" value="1"/>
</dbReference>
<dbReference type="Pfam" id="PF00281">
    <property type="entry name" value="Ribosomal_L5"/>
    <property type="match status" value="1"/>
</dbReference>
<dbReference type="Pfam" id="PF00673">
    <property type="entry name" value="Ribosomal_L5_C"/>
    <property type="match status" value="1"/>
</dbReference>
<dbReference type="PIRSF" id="PIRSF002161">
    <property type="entry name" value="Ribosomal_L5"/>
    <property type="match status" value="1"/>
</dbReference>
<dbReference type="SUPFAM" id="SSF55282">
    <property type="entry name" value="RL5-like"/>
    <property type="match status" value="1"/>
</dbReference>
<dbReference type="PROSITE" id="PS00358">
    <property type="entry name" value="RIBOSOMAL_L5"/>
    <property type="match status" value="1"/>
</dbReference>
<keyword id="KW-1185">Reference proteome</keyword>
<keyword id="KW-0687">Ribonucleoprotein</keyword>
<keyword id="KW-0689">Ribosomal protein</keyword>
<keyword id="KW-0694">RNA-binding</keyword>
<keyword id="KW-0699">rRNA-binding</keyword>
<keyword id="KW-0820">tRNA-binding</keyword>
<gene>
    <name evidence="1" type="primary">rplE</name>
    <name type="ordered locus">COSY_0181</name>
</gene>
<name>RL5_VESOH</name>